<reference key="1">
    <citation type="journal article" date="2001" name="Nature">
        <title>Complete genome sequence of a multiple drug resistant Salmonella enterica serovar Typhi CT18.</title>
        <authorList>
            <person name="Parkhill J."/>
            <person name="Dougan G."/>
            <person name="James K.D."/>
            <person name="Thomson N.R."/>
            <person name="Pickard D."/>
            <person name="Wain J."/>
            <person name="Churcher C.M."/>
            <person name="Mungall K.L."/>
            <person name="Bentley S.D."/>
            <person name="Holden M.T.G."/>
            <person name="Sebaihia M."/>
            <person name="Baker S."/>
            <person name="Basham D."/>
            <person name="Brooks K."/>
            <person name="Chillingworth T."/>
            <person name="Connerton P."/>
            <person name="Cronin A."/>
            <person name="Davis P."/>
            <person name="Davies R.M."/>
            <person name="Dowd L."/>
            <person name="White N."/>
            <person name="Farrar J."/>
            <person name="Feltwell T."/>
            <person name="Hamlin N."/>
            <person name="Haque A."/>
            <person name="Hien T.T."/>
            <person name="Holroyd S."/>
            <person name="Jagels K."/>
            <person name="Krogh A."/>
            <person name="Larsen T.S."/>
            <person name="Leather S."/>
            <person name="Moule S."/>
            <person name="O'Gaora P."/>
            <person name="Parry C."/>
            <person name="Quail M.A."/>
            <person name="Rutherford K.M."/>
            <person name="Simmonds M."/>
            <person name="Skelton J."/>
            <person name="Stevens K."/>
            <person name="Whitehead S."/>
            <person name="Barrell B.G."/>
        </authorList>
    </citation>
    <scope>NUCLEOTIDE SEQUENCE [LARGE SCALE GENOMIC DNA]</scope>
    <source>
        <strain>CT18</strain>
    </source>
</reference>
<reference key="2">
    <citation type="journal article" date="2003" name="J. Bacteriol.">
        <title>Comparative genomics of Salmonella enterica serovar Typhi strains Ty2 and CT18.</title>
        <authorList>
            <person name="Deng W."/>
            <person name="Liou S.-R."/>
            <person name="Plunkett G. III"/>
            <person name="Mayhew G.F."/>
            <person name="Rose D.J."/>
            <person name="Burland V."/>
            <person name="Kodoyianni V."/>
            <person name="Schwartz D.C."/>
            <person name="Blattner F.R."/>
        </authorList>
    </citation>
    <scope>NUCLEOTIDE SEQUENCE [LARGE SCALE GENOMIC DNA]</scope>
    <source>
        <strain>ATCC 700931 / Ty2</strain>
    </source>
</reference>
<protein>
    <recommendedName>
        <fullName>Invasion protein InvF</fullName>
    </recommendedName>
    <alternativeName>
        <fullName>Transcriptional regulator InvF</fullName>
    </alternativeName>
</protein>
<keyword id="KW-0010">Activator</keyword>
<keyword id="KW-0238">DNA-binding</keyword>
<keyword id="KW-0804">Transcription</keyword>
<keyword id="KW-0805">Transcription regulation</keyword>
<keyword id="KW-0843">Virulence</keyword>
<sequence length="216" mass="24389">MSFSESRHNENCLIQEGALLFCEQAVVAPVSGDLVFRPLKIEVLSKLLAFIDGAGLVDTTYAESDKWVLLSPEFRAIWQDRKRCEYWFLQQIITPSPAFNKVLALLRKSESYWLVGYLLAQSTSGNTMRMLGEDYGVSYTHFRRLCSRALGGKAKSELRNWRMAQSLLNSVEGHENITQLAVNHGYSSPSHFSSEIKELIGVSPRKLSNIIQLADK</sequence>
<name>INVF_SALTI</name>
<proteinExistence type="inferred from homology"/>
<feature type="chain" id="PRO_0000194526" description="Invasion protein InvF">
    <location>
        <begin position="1"/>
        <end position="216"/>
    </location>
</feature>
<feature type="domain" description="HTH araC/xylS-type" evidence="2">
    <location>
        <begin position="112"/>
        <end position="210"/>
    </location>
</feature>
<feature type="DNA-binding region" description="H-T-H motif" evidence="2">
    <location>
        <begin position="129"/>
        <end position="150"/>
    </location>
</feature>
<feature type="DNA-binding region" description="H-T-H motif" evidence="2">
    <location>
        <begin position="177"/>
        <end position="200"/>
    </location>
</feature>
<accession>P69342</accession>
<accession>P39437</accession>
<dbReference type="EMBL" id="AL513382">
    <property type="protein sequence ID" value="CAD06006.1"/>
    <property type="molecule type" value="Genomic_DNA"/>
</dbReference>
<dbReference type="EMBL" id="AE014613">
    <property type="protein sequence ID" value="AAO70362.1"/>
    <property type="molecule type" value="Genomic_DNA"/>
</dbReference>
<dbReference type="RefSeq" id="NP_457293.1">
    <property type="nucleotide sequence ID" value="NC_003198.1"/>
</dbReference>
<dbReference type="RefSeq" id="WP_001674874.1">
    <property type="nucleotide sequence ID" value="NZ_WSUR01000005.1"/>
</dbReference>
<dbReference type="SMR" id="P69342"/>
<dbReference type="STRING" id="220341.gene:17586916"/>
<dbReference type="KEGG" id="stt:t2801"/>
<dbReference type="KEGG" id="sty:STY3022"/>
<dbReference type="PATRIC" id="fig|220341.7.peg.3076"/>
<dbReference type="eggNOG" id="COG2207">
    <property type="taxonomic scope" value="Bacteria"/>
</dbReference>
<dbReference type="HOGENOM" id="CLU_082966_1_0_6"/>
<dbReference type="OMA" id="FSEGRHN"/>
<dbReference type="OrthoDB" id="7027806at2"/>
<dbReference type="Proteomes" id="UP000000541">
    <property type="component" value="Chromosome"/>
</dbReference>
<dbReference type="Proteomes" id="UP000002670">
    <property type="component" value="Chromosome"/>
</dbReference>
<dbReference type="GO" id="GO:0003700">
    <property type="term" value="F:DNA-binding transcription factor activity"/>
    <property type="evidence" value="ECO:0007669"/>
    <property type="project" value="InterPro"/>
</dbReference>
<dbReference type="GO" id="GO:0043565">
    <property type="term" value="F:sequence-specific DNA binding"/>
    <property type="evidence" value="ECO:0007669"/>
    <property type="project" value="InterPro"/>
</dbReference>
<dbReference type="Gene3D" id="1.10.10.60">
    <property type="entry name" value="Homeodomain-like"/>
    <property type="match status" value="1"/>
</dbReference>
<dbReference type="InterPro" id="IPR009057">
    <property type="entry name" value="Homeodomain-like_sf"/>
</dbReference>
<dbReference type="InterPro" id="IPR018060">
    <property type="entry name" value="HTH_AraC"/>
</dbReference>
<dbReference type="InterPro" id="IPR018062">
    <property type="entry name" value="HTH_AraC-typ_CS"/>
</dbReference>
<dbReference type="NCBIfam" id="NF011868">
    <property type="entry name" value="PRK15340.1"/>
    <property type="match status" value="1"/>
</dbReference>
<dbReference type="Pfam" id="PF12833">
    <property type="entry name" value="HTH_18"/>
    <property type="match status" value="1"/>
</dbReference>
<dbReference type="SMART" id="SM00342">
    <property type="entry name" value="HTH_ARAC"/>
    <property type="match status" value="1"/>
</dbReference>
<dbReference type="SUPFAM" id="SSF46689">
    <property type="entry name" value="Homeodomain-like"/>
    <property type="match status" value="1"/>
</dbReference>
<dbReference type="PROSITE" id="PS00041">
    <property type="entry name" value="HTH_ARAC_FAMILY_1"/>
    <property type="match status" value="1"/>
</dbReference>
<dbReference type="PROSITE" id="PS01124">
    <property type="entry name" value="HTH_ARAC_FAMILY_2"/>
    <property type="match status" value="1"/>
</dbReference>
<evidence type="ECO:0000250" key="1"/>
<evidence type="ECO:0000255" key="2">
    <source>
        <dbReference type="PROSITE-ProRule" id="PRU00593"/>
    </source>
</evidence>
<gene>
    <name type="primary">invF</name>
    <name type="ordered locus">STY3022</name>
    <name type="ordered locus">t2801</name>
</gene>
<organism>
    <name type="scientific">Salmonella typhi</name>
    <dbReference type="NCBI Taxonomy" id="90370"/>
    <lineage>
        <taxon>Bacteria</taxon>
        <taxon>Pseudomonadati</taxon>
        <taxon>Pseudomonadota</taxon>
        <taxon>Gammaproteobacteria</taxon>
        <taxon>Enterobacterales</taxon>
        <taxon>Enterobacteriaceae</taxon>
        <taxon>Salmonella</taxon>
    </lineage>
</organism>
<comment type="function">
    <text evidence="1">Transcriptional regulator required for the expression of several genes encoding type III secretion system SPI1 effector proteins. The interaction with SicA is necessary for the activation of sigDE (sopB pipC), sicAsipBCDA, and sopE (By similarity).</text>
</comment>
<comment type="induction">
    <text evidence="1">Transcriptionally activated by HilA.</text>
</comment>